<gene>
    <name evidence="3" type="primary">BAALC-AS2</name>
    <name evidence="3" type="synonym">BAALCOS</name>
    <name evidence="3" type="synonym">C8orf56</name>
</gene>
<accession>P0C853</accession>
<reference key="1">
    <citation type="journal article" date="2006" name="Nature">
        <title>DNA sequence and analysis of human chromosome 8.</title>
        <authorList>
            <person name="Nusbaum C."/>
            <person name="Mikkelsen T.S."/>
            <person name="Zody M.C."/>
            <person name="Asakawa S."/>
            <person name="Taudien S."/>
            <person name="Garber M."/>
            <person name="Kodira C.D."/>
            <person name="Schueler M.G."/>
            <person name="Shimizu A."/>
            <person name="Whittaker C.A."/>
            <person name="Chang J.L."/>
            <person name="Cuomo C.A."/>
            <person name="Dewar K."/>
            <person name="FitzGerald M.G."/>
            <person name="Yang X."/>
            <person name="Allen N.R."/>
            <person name="Anderson S."/>
            <person name="Asakawa T."/>
            <person name="Blechschmidt K."/>
            <person name="Bloom T."/>
            <person name="Borowsky M.L."/>
            <person name="Butler J."/>
            <person name="Cook A."/>
            <person name="Corum B."/>
            <person name="DeArellano K."/>
            <person name="DeCaprio D."/>
            <person name="Dooley K.T."/>
            <person name="Dorris L. III"/>
            <person name="Engels R."/>
            <person name="Gloeckner G."/>
            <person name="Hafez N."/>
            <person name="Hagopian D.S."/>
            <person name="Hall J.L."/>
            <person name="Ishikawa S.K."/>
            <person name="Jaffe D.B."/>
            <person name="Kamat A."/>
            <person name="Kudoh J."/>
            <person name="Lehmann R."/>
            <person name="Lokitsang T."/>
            <person name="Macdonald P."/>
            <person name="Major J.E."/>
            <person name="Matthews C.D."/>
            <person name="Mauceli E."/>
            <person name="Menzel U."/>
            <person name="Mihalev A.H."/>
            <person name="Minoshima S."/>
            <person name="Murayama Y."/>
            <person name="Naylor J.W."/>
            <person name="Nicol R."/>
            <person name="Nguyen C."/>
            <person name="O'Leary S.B."/>
            <person name="O'Neill K."/>
            <person name="Parker S.C.J."/>
            <person name="Polley A."/>
            <person name="Raymond C.K."/>
            <person name="Reichwald K."/>
            <person name="Rodriguez J."/>
            <person name="Sasaki T."/>
            <person name="Schilhabel M."/>
            <person name="Siddiqui R."/>
            <person name="Smith C.L."/>
            <person name="Sneddon T.P."/>
            <person name="Talamas J.A."/>
            <person name="Tenzin P."/>
            <person name="Topham K."/>
            <person name="Venkataraman V."/>
            <person name="Wen G."/>
            <person name="Yamazaki S."/>
            <person name="Young S.K."/>
            <person name="Zeng Q."/>
            <person name="Zimmer A.R."/>
            <person name="Rosenthal A."/>
            <person name="Birren B.W."/>
            <person name="Platzer M."/>
            <person name="Shimizu N."/>
            <person name="Lander E.S."/>
        </authorList>
    </citation>
    <scope>NUCLEOTIDE SEQUENCE [LARGE SCALE GENOMIC DNA]</scope>
</reference>
<reference key="2">
    <citation type="journal article" date="2004" name="Genome Res.">
        <title>The status, quality, and expansion of the NIH full-length cDNA project: the Mammalian Gene Collection (MGC).</title>
        <authorList>
            <consortium name="The MGC Project Team"/>
        </authorList>
    </citation>
    <scope>NUCLEOTIDE SEQUENCE [LARGE SCALE MRNA]</scope>
    <source>
        <tissue>Brain</tissue>
        <tissue>Hippocampus</tissue>
    </source>
</reference>
<sequence length="105" mass="11579">MSLKSWHPQSKTKRVGASEGNPQWGSGSMEAPLLSSFLPPLASEAELTGNTWFLHRCSCILNLEESMDSDWGAWWGVSLPRRAPFLIYGSDGPWCTQAGFPGWGH</sequence>
<proteinExistence type="uncertain"/>
<evidence type="ECO:0000256" key="1">
    <source>
        <dbReference type="SAM" id="MobiDB-lite"/>
    </source>
</evidence>
<evidence type="ECO:0000305" key="2"/>
<evidence type="ECO:0000312" key="3">
    <source>
        <dbReference type="HGNC" id="HGNC:28595"/>
    </source>
</evidence>
<protein>
    <recommendedName>
        <fullName evidence="3">Putative uncharacterized protein BAALC-AS2</fullName>
    </recommendedName>
    <alternativeName>
        <fullName evidence="3">BAALC antisense RNA 2</fullName>
    </alternativeName>
    <alternativeName>
        <fullName evidence="2">BAALC antisense gene protein 2</fullName>
    </alternativeName>
    <alternativeName>
        <fullName evidence="3">BAALC opposite strand protein</fullName>
    </alternativeName>
</protein>
<organism>
    <name type="scientific">Homo sapiens</name>
    <name type="common">Human</name>
    <dbReference type="NCBI Taxonomy" id="9606"/>
    <lineage>
        <taxon>Eukaryota</taxon>
        <taxon>Metazoa</taxon>
        <taxon>Chordata</taxon>
        <taxon>Craniata</taxon>
        <taxon>Vertebrata</taxon>
        <taxon>Euteleostomi</taxon>
        <taxon>Mammalia</taxon>
        <taxon>Eutheria</taxon>
        <taxon>Euarchontoglires</taxon>
        <taxon>Primates</taxon>
        <taxon>Haplorrhini</taxon>
        <taxon>Catarrhini</taxon>
        <taxon>Hominidae</taxon>
        <taxon>Homo</taxon>
    </lineage>
</organism>
<dbReference type="EMBL" id="AP003550">
    <property type="status" value="NOT_ANNOTATED_CDS"/>
    <property type="molecule type" value="Genomic_DNA"/>
</dbReference>
<dbReference type="EMBL" id="BC029562">
    <property type="status" value="NOT_ANNOTATED_CDS"/>
    <property type="molecule type" value="mRNA"/>
</dbReference>
<dbReference type="EMBL" id="BC071743">
    <property type="status" value="NOT_ANNOTATED_CDS"/>
    <property type="molecule type" value="mRNA"/>
</dbReference>
<dbReference type="BioMuta" id="HGNC:28595"/>
<dbReference type="AGR" id="HGNC:28595"/>
<dbReference type="GeneCards" id="BAALC-AS2"/>
<dbReference type="HGNC" id="HGNC:28595">
    <property type="gene designation" value="BAALC-AS2"/>
</dbReference>
<dbReference type="neXtProt" id="NX_P0C853"/>
<dbReference type="InParanoid" id="P0C853"/>
<dbReference type="PAN-GO" id="P0C853">
    <property type="GO annotations" value="0 GO annotations based on evolutionary models"/>
</dbReference>
<dbReference type="PathwayCommons" id="P0C853"/>
<dbReference type="SignaLink" id="P0C853"/>
<dbReference type="Pharos" id="P0C853">
    <property type="development level" value="Tdark"/>
</dbReference>
<dbReference type="Proteomes" id="UP000005640">
    <property type="component" value="Unplaced"/>
</dbReference>
<dbReference type="RNAct" id="P0C853">
    <property type="molecule type" value="protein"/>
</dbReference>
<comment type="caution">
    <text evidence="2">Product of a dubious gene prediction. Overlaps in opposite strand with BAALC.</text>
</comment>
<name>BAAS2_HUMAN</name>
<keyword id="KW-1185">Reference proteome</keyword>
<feature type="chain" id="PRO_0000347233" description="Putative uncharacterized protein BAALC-AS2">
    <location>
        <begin position="1"/>
        <end position="105"/>
    </location>
</feature>
<feature type="region of interest" description="Disordered" evidence="1">
    <location>
        <begin position="1"/>
        <end position="27"/>
    </location>
</feature>